<keyword id="KW-0067">ATP-binding</keyword>
<keyword id="KW-0143">Chaperone</keyword>
<keyword id="KW-0547">Nucleotide-binding</keyword>
<keyword id="KW-0597">Phosphoprotein</keyword>
<keyword id="KW-0346">Stress response</keyword>
<comment type="function">
    <text evidence="1">Acts as a chaperone.</text>
</comment>
<comment type="induction">
    <text evidence="1">By stress conditions e.g. heat shock.</text>
</comment>
<comment type="similarity">
    <text evidence="1">Belongs to the heat shock protein 70 family.</text>
</comment>
<organism>
    <name type="scientific">Burkholderia orbicola (strain MC0-3)</name>
    <dbReference type="NCBI Taxonomy" id="406425"/>
    <lineage>
        <taxon>Bacteria</taxon>
        <taxon>Pseudomonadati</taxon>
        <taxon>Pseudomonadota</taxon>
        <taxon>Betaproteobacteria</taxon>
        <taxon>Burkholderiales</taxon>
        <taxon>Burkholderiaceae</taxon>
        <taxon>Burkholderia</taxon>
        <taxon>Burkholderia cepacia complex</taxon>
        <taxon>Burkholderia orbicola</taxon>
    </lineage>
</organism>
<accession>B1JW19</accession>
<feature type="chain" id="PRO_1000119678" description="Chaperone protein DnaK">
    <location>
        <begin position="1"/>
        <end position="650"/>
    </location>
</feature>
<feature type="modified residue" description="Phosphothreonine; by autocatalysis" evidence="1">
    <location>
        <position position="200"/>
    </location>
</feature>
<reference key="1">
    <citation type="submission" date="2008-02" db="EMBL/GenBank/DDBJ databases">
        <title>Complete sequence of chromosome 1 of Burkholderia cenocepacia MC0-3.</title>
        <authorList>
            <person name="Copeland A."/>
            <person name="Lucas S."/>
            <person name="Lapidus A."/>
            <person name="Barry K."/>
            <person name="Bruce D."/>
            <person name="Goodwin L."/>
            <person name="Glavina del Rio T."/>
            <person name="Dalin E."/>
            <person name="Tice H."/>
            <person name="Pitluck S."/>
            <person name="Chain P."/>
            <person name="Malfatti S."/>
            <person name="Shin M."/>
            <person name="Vergez L."/>
            <person name="Schmutz J."/>
            <person name="Larimer F."/>
            <person name="Land M."/>
            <person name="Hauser L."/>
            <person name="Kyrpides N."/>
            <person name="Mikhailova N."/>
            <person name="Tiedje J."/>
            <person name="Richardson P."/>
        </authorList>
    </citation>
    <scope>NUCLEOTIDE SEQUENCE [LARGE SCALE GENOMIC DNA]</scope>
    <source>
        <strain>MC0-3</strain>
    </source>
</reference>
<sequence>MGKIIGIDLGTTNSCVAIMEGNQVKVIENSEGTRTTPSIIAYMDDNEVLVGAPAKRQSVTNPKNTLFAVKRLIGRRFEEKEVQKDIGLMPYSIIKADNGDAWVEAHGEKLAPPQVSAEVLRKMKKTAEDYLGEPVTEAVITVPAYFNDSQRQATKDAGRIAGLEVKRIINEPTAAALAFGLDKVEKGDRKIAVYDLGGGTFDVSIIEIADVDGEMQFEVLSTNGDTFLGGEDFDQRIIDYIIGEFKKEQGVDLSKDVLALQRLKEAAEKAKIELSSGQQTEINLPYITADASGPKHLNLKITRAKLEALVEDLVERTIEPCRIAIKDAGVKVSDIDDVILVGGQTRMPKVMEKVKEFFGKDPRRDVNPDEAVAVGAAIQGQVLSGDRKDVLLLDVTPLSLGIETLGGVMTKMINKNTTIPTKHAQVYSTADDNQGAVTIKVFQGEREMAAGNKLLGEFNLEGIPPAPRGVPQIEVTFDIDANGILHVGAKDKATGKENKITIKANSGLSEAEIDQMIKDAEANAAEDHKLRELADSRNQGDALVHSTKKALTEYGDKLDAGEKEAIEASLKSLEEVLKDTSADKAAIDAKVEELGKVSQKLGEKMYADMQAQQAGAAGAAGAAEGAAHAGGAQQAADDVVDAEFKEVKKD</sequence>
<gene>
    <name evidence="1" type="primary">dnaK</name>
    <name type="ordered locus">Bcenmc03_0721</name>
</gene>
<protein>
    <recommendedName>
        <fullName evidence="1">Chaperone protein DnaK</fullName>
    </recommendedName>
    <alternativeName>
        <fullName evidence="1">HSP70</fullName>
    </alternativeName>
    <alternativeName>
        <fullName evidence="1">Heat shock 70 kDa protein</fullName>
    </alternativeName>
    <alternativeName>
        <fullName evidence="1">Heat shock protein 70</fullName>
    </alternativeName>
</protein>
<evidence type="ECO:0000255" key="1">
    <source>
        <dbReference type="HAMAP-Rule" id="MF_00332"/>
    </source>
</evidence>
<proteinExistence type="inferred from homology"/>
<name>DNAK_BURO0</name>
<dbReference type="EMBL" id="CP000958">
    <property type="protein sequence ID" value="ACA89899.1"/>
    <property type="molecule type" value="Genomic_DNA"/>
</dbReference>
<dbReference type="RefSeq" id="WP_006476838.1">
    <property type="nucleotide sequence ID" value="NC_010508.1"/>
</dbReference>
<dbReference type="SMR" id="B1JW19"/>
<dbReference type="GeneID" id="83047519"/>
<dbReference type="KEGG" id="bcm:Bcenmc03_0721"/>
<dbReference type="HOGENOM" id="CLU_005965_2_1_4"/>
<dbReference type="Proteomes" id="UP000002169">
    <property type="component" value="Chromosome 1"/>
</dbReference>
<dbReference type="GO" id="GO:0005524">
    <property type="term" value="F:ATP binding"/>
    <property type="evidence" value="ECO:0007669"/>
    <property type="project" value="UniProtKB-UniRule"/>
</dbReference>
<dbReference type="GO" id="GO:0140662">
    <property type="term" value="F:ATP-dependent protein folding chaperone"/>
    <property type="evidence" value="ECO:0007669"/>
    <property type="project" value="InterPro"/>
</dbReference>
<dbReference type="GO" id="GO:0051082">
    <property type="term" value="F:unfolded protein binding"/>
    <property type="evidence" value="ECO:0007669"/>
    <property type="project" value="InterPro"/>
</dbReference>
<dbReference type="CDD" id="cd10234">
    <property type="entry name" value="ASKHA_NBD_HSP70_DnaK-like"/>
    <property type="match status" value="1"/>
</dbReference>
<dbReference type="FunFam" id="2.60.34.10:FF:000014">
    <property type="entry name" value="Chaperone protein DnaK HSP70"/>
    <property type="match status" value="1"/>
</dbReference>
<dbReference type="FunFam" id="3.30.30.30:FF:000003">
    <property type="entry name" value="Heat shock protein 9"/>
    <property type="match status" value="1"/>
</dbReference>
<dbReference type="FunFam" id="1.20.1270.10:FF:000001">
    <property type="entry name" value="Molecular chaperone DnaK"/>
    <property type="match status" value="1"/>
</dbReference>
<dbReference type="FunFam" id="3.30.420.40:FF:000004">
    <property type="entry name" value="Molecular chaperone DnaK"/>
    <property type="match status" value="1"/>
</dbReference>
<dbReference type="FunFam" id="3.90.640.10:FF:000003">
    <property type="entry name" value="Molecular chaperone DnaK"/>
    <property type="match status" value="1"/>
</dbReference>
<dbReference type="Gene3D" id="1.20.1270.10">
    <property type="match status" value="1"/>
</dbReference>
<dbReference type="Gene3D" id="3.30.420.40">
    <property type="match status" value="2"/>
</dbReference>
<dbReference type="Gene3D" id="3.90.640.10">
    <property type="entry name" value="Actin, Chain A, domain 4"/>
    <property type="match status" value="1"/>
</dbReference>
<dbReference type="Gene3D" id="2.60.34.10">
    <property type="entry name" value="Substrate Binding Domain Of DNAk, Chain A, domain 1"/>
    <property type="match status" value="1"/>
</dbReference>
<dbReference type="HAMAP" id="MF_00332">
    <property type="entry name" value="DnaK"/>
    <property type="match status" value="1"/>
</dbReference>
<dbReference type="InterPro" id="IPR043129">
    <property type="entry name" value="ATPase_NBD"/>
</dbReference>
<dbReference type="InterPro" id="IPR012725">
    <property type="entry name" value="Chaperone_DnaK"/>
</dbReference>
<dbReference type="InterPro" id="IPR018181">
    <property type="entry name" value="Heat_shock_70_CS"/>
</dbReference>
<dbReference type="InterPro" id="IPR029048">
    <property type="entry name" value="HSP70_C_sf"/>
</dbReference>
<dbReference type="InterPro" id="IPR029047">
    <property type="entry name" value="HSP70_peptide-bd_sf"/>
</dbReference>
<dbReference type="InterPro" id="IPR013126">
    <property type="entry name" value="Hsp_70_fam"/>
</dbReference>
<dbReference type="NCBIfam" id="NF001413">
    <property type="entry name" value="PRK00290.1"/>
    <property type="match status" value="1"/>
</dbReference>
<dbReference type="NCBIfam" id="NF003520">
    <property type="entry name" value="PRK05183.1"/>
    <property type="match status" value="1"/>
</dbReference>
<dbReference type="NCBIfam" id="TIGR02350">
    <property type="entry name" value="prok_dnaK"/>
    <property type="match status" value="1"/>
</dbReference>
<dbReference type="PANTHER" id="PTHR19375">
    <property type="entry name" value="HEAT SHOCK PROTEIN 70KDA"/>
    <property type="match status" value="1"/>
</dbReference>
<dbReference type="Pfam" id="PF00012">
    <property type="entry name" value="HSP70"/>
    <property type="match status" value="1"/>
</dbReference>
<dbReference type="PRINTS" id="PR00301">
    <property type="entry name" value="HEATSHOCK70"/>
</dbReference>
<dbReference type="SUPFAM" id="SSF53067">
    <property type="entry name" value="Actin-like ATPase domain"/>
    <property type="match status" value="2"/>
</dbReference>
<dbReference type="SUPFAM" id="SSF100934">
    <property type="entry name" value="Heat shock protein 70kD (HSP70), C-terminal subdomain"/>
    <property type="match status" value="1"/>
</dbReference>
<dbReference type="SUPFAM" id="SSF100920">
    <property type="entry name" value="Heat shock protein 70kD (HSP70), peptide-binding domain"/>
    <property type="match status" value="1"/>
</dbReference>
<dbReference type="PROSITE" id="PS00297">
    <property type="entry name" value="HSP70_1"/>
    <property type="match status" value="1"/>
</dbReference>
<dbReference type="PROSITE" id="PS00329">
    <property type="entry name" value="HSP70_2"/>
    <property type="match status" value="1"/>
</dbReference>
<dbReference type="PROSITE" id="PS01036">
    <property type="entry name" value="HSP70_3"/>
    <property type="match status" value="1"/>
</dbReference>